<feature type="chain" id="PRO_1000147891" description="Polyribonucleotide nucleotidyltransferase">
    <location>
        <begin position="1"/>
        <end position="719"/>
    </location>
</feature>
<feature type="domain" description="KH" evidence="1">
    <location>
        <begin position="558"/>
        <end position="617"/>
    </location>
</feature>
<feature type="domain" description="S1 motif" evidence="1">
    <location>
        <begin position="627"/>
        <end position="695"/>
    </location>
</feature>
<feature type="binding site" evidence="1">
    <location>
        <position position="491"/>
    </location>
    <ligand>
        <name>Mg(2+)</name>
        <dbReference type="ChEBI" id="CHEBI:18420"/>
    </ligand>
</feature>
<feature type="binding site" evidence="1">
    <location>
        <position position="497"/>
    </location>
    <ligand>
        <name>Mg(2+)</name>
        <dbReference type="ChEBI" id="CHEBI:18420"/>
    </ligand>
</feature>
<accession>A9IGJ9</accession>
<comment type="function">
    <text evidence="1">Involved in mRNA degradation. Catalyzes the phosphorolysis of single-stranded polyribonucleotides processively in the 3'- to 5'-direction.</text>
</comment>
<comment type="catalytic activity">
    <reaction evidence="1">
        <text>RNA(n+1) + phosphate = RNA(n) + a ribonucleoside 5'-diphosphate</text>
        <dbReference type="Rhea" id="RHEA:22096"/>
        <dbReference type="Rhea" id="RHEA-COMP:14527"/>
        <dbReference type="Rhea" id="RHEA-COMP:17342"/>
        <dbReference type="ChEBI" id="CHEBI:43474"/>
        <dbReference type="ChEBI" id="CHEBI:57930"/>
        <dbReference type="ChEBI" id="CHEBI:140395"/>
        <dbReference type="EC" id="2.7.7.8"/>
    </reaction>
</comment>
<comment type="cofactor">
    <cofactor evidence="1">
        <name>Mg(2+)</name>
        <dbReference type="ChEBI" id="CHEBI:18420"/>
    </cofactor>
</comment>
<comment type="subcellular location">
    <subcellularLocation>
        <location evidence="1">Cytoplasm</location>
    </subcellularLocation>
</comment>
<comment type="similarity">
    <text evidence="1">Belongs to the polyribonucleotide nucleotidyltransferase family.</text>
</comment>
<dbReference type="EC" id="2.7.7.8" evidence="1"/>
<dbReference type="EMBL" id="AM902716">
    <property type="protein sequence ID" value="CAP41949.1"/>
    <property type="molecule type" value="Genomic_DNA"/>
</dbReference>
<dbReference type="SMR" id="A9IGJ9"/>
<dbReference type="STRING" id="94624.Bpet1610"/>
<dbReference type="KEGG" id="bpt:Bpet1610"/>
<dbReference type="eggNOG" id="COG1185">
    <property type="taxonomic scope" value="Bacteria"/>
</dbReference>
<dbReference type="Proteomes" id="UP000001225">
    <property type="component" value="Chromosome"/>
</dbReference>
<dbReference type="GO" id="GO:0005829">
    <property type="term" value="C:cytosol"/>
    <property type="evidence" value="ECO:0007669"/>
    <property type="project" value="TreeGrafter"/>
</dbReference>
<dbReference type="GO" id="GO:0000175">
    <property type="term" value="F:3'-5'-RNA exonuclease activity"/>
    <property type="evidence" value="ECO:0007669"/>
    <property type="project" value="TreeGrafter"/>
</dbReference>
<dbReference type="GO" id="GO:0000287">
    <property type="term" value="F:magnesium ion binding"/>
    <property type="evidence" value="ECO:0007669"/>
    <property type="project" value="UniProtKB-UniRule"/>
</dbReference>
<dbReference type="GO" id="GO:0004654">
    <property type="term" value="F:polyribonucleotide nucleotidyltransferase activity"/>
    <property type="evidence" value="ECO:0007669"/>
    <property type="project" value="UniProtKB-UniRule"/>
</dbReference>
<dbReference type="GO" id="GO:0003723">
    <property type="term" value="F:RNA binding"/>
    <property type="evidence" value="ECO:0007669"/>
    <property type="project" value="UniProtKB-UniRule"/>
</dbReference>
<dbReference type="GO" id="GO:0006402">
    <property type="term" value="P:mRNA catabolic process"/>
    <property type="evidence" value="ECO:0007669"/>
    <property type="project" value="UniProtKB-UniRule"/>
</dbReference>
<dbReference type="GO" id="GO:0006396">
    <property type="term" value="P:RNA processing"/>
    <property type="evidence" value="ECO:0007669"/>
    <property type="project" value="InterPro"/>
</dbReference>
<dbReference type="CDD" id="cd02393">
    <property type="entry name" value="KH-I_PNPase"/>
    <property type="match status" value="1"/>
</dbReference>
<dbReference type="CDD" id="cd11363">
    <property type="entry name" value="RNase_PH_PNPase_1"/>
    <property type="match status" value="1"/>
</dbReference>
<dbReference type="CDD" id="cd11364">
    <property type="entry name" value="RNase_PH_PNPase_2"/>
    <property type="match status" value="1"/>
</dbReference>
<dbReference type="CDD" id="cd04472">
    <property type="entry name" value="S1_PNPase"/>
    <property type="match status" value="1"/>
</dbReference>
<dbReference type="FunFam" id="3.30.1370.10:FF:000001">
    <property type="entry name" value="Polyribonucleotide nucleotidyltransferase"/>
    <property type="match status" value="1"/>
</dbReference>
<dbReference type="FunFam" id="3.30.230.70:FF:000001">
    <property type="entry name" value="Polyribonucleotide nucleotidyltransferase"/>
    <property type="match status" value="1"/>
</dbReference>
<dbReference type="FunFam" id="3.30.230.70:FF:000002">
    <property type="entry name" value="Polyribonucleotide nucleotidyltransferase"/>
    <property type="match status" value="1"/>
</dbReference>
<dbReference type="FunFam" id="2.40.50.140:FF:000189">
    <property type="entry name" value="Polyribonucleotide nucleotidyltransferase, putative"/>
    <property type="match status" value="1"/>
</dbReference>
<dbReference type="Gene3D" id="3.30.230.70">
    <property type="entry name" value="GHMP Kinase, N-terminal domain"/>
    <property type="match status" value="2"/>
</dbReference>
<dbReference type="Gene3D" id="3.30.1370.10">
    <property type="entry name" value="K Homology domain, type 1"/>
    <property type="match status" value="1"/>
</dbReference>
<dbReference type="Gene3D" id="2.40.50.140">
    <property type="entry name" value="Nucleic acid-binding proteins"/>
    <property type="match status" value="1"/>
</dbReference>
<dbReference type="HAMAP" id="MF_01595">
    <property type="entry name" value="PNPase"/>
    <property type="match status" value="1"/>
</dbReference>
<dbReference type="InterPro" id="IPR001247">
    <property type="entry name" value="ExoRNase_PH_dom1"/>
</dbReference>
<dbReference type="InterPro" id="IPR015847">
    <property type="entry name" value="ExoRNase_PH_dom2"/>
</dbReference>
<dbReference type="InterPro" id="IPR036345">
    <property type="entry name" value="ExoRNase_PH_dom2_sf"/>
</dbReference>
<dbReference type="InterPro" id="IPR004087">
    <property type="entry name" value="KH_dom"/>
</dbReference>
<dbReference type="InterPro" id="IPR004088">
    <property type="entry name" value="KH_dom_type_1"/>
</dbReference>
<dbReference type="InterPro" id="IPR036612">
    <property type="entry name" value="KH_dom_type_1_sf"/>
</dbReference>
<dbReference type="InterPro" id="IPR012340">
    <property type="entry name" value="NA-bd_OB-fold"/>
</dbReference>
<dbReference type="InterPro" id="IPR012162">
    <property type="entry name" value="PNPase"/>
</dbReference>
<dbReference type="InterPro" id="IPR027408">
    <property type="entry name" value="PNPase/RNase_PH_dom_sf"/>
</dbReference>
<dbReference type="InterPro" id="IPR015848">
    <property type="entry name" value="PNPase_PH_RNA-bd_bac/org-type"/>
</dbReference>
<dbReference type="InterPro" id="IPR036456">
    <property type="entry name" value="PNPase_PH_RNA-bd_sf"/>
</dbReference>
<dbReference type="InterPro" id="IPR020568">
    <property type="entry name" value="Ribosomal_Su5_D2-typ_SF"/>
</dbReference>
<dbReference type="InterPro" id="IPR003029">
    <property type="entry name" value="S1_domain"/>
</dbReference>
<dbReference type="NCBIfam" id="TIGR03591">
    <property type="entry name" value="polynuc_phos"/>
    <property type="match status" value="1"/>
</dbReference>
<dbReference type="NCBIfam" id="NF008805">
    <property type="entry name" value="PRK11824.1"/>
    <property type="match status" value="1"/>
</dbReference>
<dbReference type="PANTHER" id="PTHR11252">
    <property type="entry name" value="POLYRIBONUCLEOTIDE NUCLEOTIDYLTRANSFERASE"/>
    <property type="match status" value="1"/>
</dbReference>
<dbReference type="PANTHER" id="PTHR11252:SF0">
    <property type="entry name" value="POLYRIBONUCLEOTIDE NUCLEOTIDYLTRANSFERASE 1, MITOCHONDRIAL"/>
    <property type="match status" value="1"/>
</dbReference>
<dbReference type="Pfam" id="PF00013">
    <property type="entry name" value="KH_1"/>
    <property type="match status" value="1"/>
</dbReference>
<dbReference type="Pfam" id="PF03726">
    <property type="entry name" value="PNPase"/>
    <property type="match status" value="1"/>
</dbReference>
<dbReference type="Pfam" id="PF01138">
    <property type="entry name" value="RNase_PH"/>
    <property type="match status" value="2"/>
</dbReference>
<dbReference type="Pfam" id="PF03725">
    <property type="entry name" value="RNase_PH_C"/>
    <property type="match status" value="2"/>
</dbReference>
<dbReference type="Pfam" id="PF00575">
    <property type="entry name" value="S1"/>
    <property type="match status" value="1"/>
</dbReference>
<dbReference type="PIRSF" id="PIRSF005499">
    <property type="entry name" value="PNPase"/>
    <property type="match status" value="1"/>
</dbReference>
<dbReference type="SMART" id="SM00322">
    <property type="entry name" value="KH"/>
    <property type="match status" value="1"/>
</dbReference>
<dbReference type="SMART" id="SM00316">
    <property type="entry name" value="S1"/>
    <property type="match status" value="1"/>
</dbReference>
<dbReference type="SUPFAM" id="SSF54791">
    <property type="entry name" value="Eukaryotic type KH-domain (KH-domain type I)"/>
    <property type="match status" value="1"/>
</dbReference>
<dbReference type="SUPFAM" id="SSF50249">
    <property type="entry name" value="Nucleic acid-binding proteins"/>
    <property type="match status" value="1"/>
</dbReference>
<dbReference type="SUPFAM" id="SSF46915">
    <property type="entry name" value="Polynucleotide phosphorylase/guanosine pentaphosphate synthase (PNPase/GPSI), domain 3"/>
    <property type="match status" value="1"/>
</dbReference>
<dbReference type="SUPFAM" id="SSF55666">
    <property type="entry name" value="Ribonuclease PH domain 2-like"/>
    <property type="match status" value="2"/>
</dbReference>
<dbReference type="SUPFAM" id="SSF54211">
    <property type="entry name" value="Ribosomal protein S5 domain 2-like"/>
    <property type="match status" value="2"/>
</dbReference>
<dbReference type="PROSITE" id="PS50084">
    <property type="entry name" value="KH_TYPE_1"/>
    <property type="match status" value="1"/>
</dbReference>
<dbReference type="PROSITE" id="PS50126">
    <property type="entry name" value="S1"/>
    <property type="match status" value="1"/>
</dbReference>
<gene>
    <name evidence="1" type="primary">pnp</name>
    <name type="ordered locus">Bpet1610</name>
</gene>
<reference key="1">
    <citation type="journal article" date="2008" name="BMC Genomics">
        <title>The missing link: Bordetella petrii is endowed with both the metabolic versatility of environmental bacteria and virulence traits of pathogenic Bordetellae.</title>
        <authorList>
            <person name="Gross R."/>
            <person name="Guzman C.A."/>
            <person name="Sebaihia M."/>
            <person name="Martin dos Santos V.A.P."/>
            <person name="Pieper D.H."/>
            <person name="Koebnik R."/>
            <person name="Lechner M."/>
            <person name="Bartels D."/>
            <person name="Buhrmester J."/>
            <person name="Choudhuri J.V."/>
            <person name="Ebensen T."/>
            <person name="Gaigalat L."/>
            <person name="Herrmann S."/>
            <person name="Khachane A.N."/>
            <person name="Larisch C."/>
            <person name="Link S."/>
            <person name="Linke B."/>
            <person name="Meyer F."/>
            <person name="Mormann S."/>
            <person name="Nakunst D."/>
            <person name="Rueckert C."/>
            <person name="Schneiker-Bekel S."/>
            <person name="Schulze K."/>
            <person name="Voerholter F.-J."/>
            <person name="Yevsa T."/>
            <person name="Engle J.T."/>
            <person name="Goldman W.E."/>
            <person name="Puehler A."/>
            <person name="Goebel U.B."/>
            <person name="Goesmann A."/>
            <person name="Bloecker H."/>
            <person name="Kaiser O."/>
            <person name="Martinez-Arias R."/>
        </authorList>
    </citation>
    <scope>NUCLEOTIDE SEQUENCE [LARGE SCALE GENOMIC DNA]</scope>
    <source>
        <strain>ATCC BAA-461 / DSM 12804 / CCUG 43448</strain>
    </source>
</reference>
<evidence type="ECO:0000255" key="1">
    <source>
        <dbReference type="HAMAP-Rule" id="MF_01595"/>
    </source>
</evidence>
<protein>
    <recommendedName>
        <fullName evidence="1">Polyribonucleotide nucleotidyltransferase</fullName>
        <ecNumber evidence="1">2.7.7.8</ecNumber>
    </recommendedName>
    <alternativeName>
        <fullName evidence="1">Polynucleotide phosphorylase</fullName>
        <shortName evidence="1">PNPase</shortName>
    </alternativeName>
</protein>
<proteinExistence type="inferred from homology"/>
<name>PNP_BORPD</name>
<sequence length="719" mass="77422">MFNKVTKSFQYGQHTVVLETGEIARQASGAVLVSVDDTVVLATVVAAKKAKPGQTFFPLTVDYIEKTYAAGRIPGGFFKREGKPSEKETLTSRLIDRPLRPLFPEGFYNEVQVVLHTVSVNPEIDPDIPAMIGASAALAISGIPFNGPIGAARVGYVDGQYVLNPTATQLKSSQMDLVVAGTENAVLMVESEAKQLSEDVMLGGVVYGHEQMQAAINAIHDLVRDAGKPDWEWQPEPKNEALIAAVTAAAQEKLVAAYQERQKQARTALLRNVYADVHAALAEQAAAAGQDAPDAVTVDNILFDLEARIVRGQILNGEPRIDGRDTRTVRPIEIRLGVLPRAHGSALFTRGETQALVVATLGTKQDEQIIDALMGEYRDRFMLHYNMPPFATGETGRIGVPKRREIGHGRLAKRALVSLLPAHEDFQYTIRLVSEITESNGSSSMASVCGGSLAMMDAGVPLQDHVAGVAMGLILDDGKFAVLTDILGDEDHLGDMDFKVAGTQNGITALQMDIKIQGITKEIMQVALAQAREGRLHILGKMREALEGSRGELSAFAPRMLTIKINPEKIRDVIGKGGATIRALTEETGTQIDISDDGTIVIASVDEAQAKEAQRRIVELTADVEVGQVYDGSVLRLLDFGAIVQVLPGRDGLLHISEIANYRIANINDVLKVGQQVRVKVIEADDKGRLRLSVKAIGGIEQQQAGGAEPAAQPESQAE</sequence>
<keyword id="KW-0963">Cytoplasm</keyword>
<keyword id="KW-0460">Magnesium</keyword>
<keyword id="KW-0479">Metal-binding</keyword>
<keyword id="KW-0548">Nucleotidyltransferase</keyword>
<keyword id="KW-0694">RNA-binding</keyword>
<keyword id="KW-0808">Transferase</keyword>
<organism>
    <name type="scientific">Bordetella petrii (strain ATCC BAA-461 / DSM 12804 / CCUG 43448)</name>
    <dbReference type="NCBI Taxonomy" id="340100"/>
    <lineage>
        <taxon>Bacteria</taxon>
        <taxon>Pseudomonadati</taxon>
        <taxon>Pseudomonadota</taxon>
        <taxon>Betaproteobacteria</taxon>
        <taxon>Burkholderiales</taxon>
        <taxon>Alcaligenaceae</taxon>
        <taxon>Bordetella</taxon>
    </lineage>
</organism>